<gene>
    <name evidence="1" type="primary">nanE</name>
    <name type="ordered locus">MYPU_3630</name>
</gene>
<accession>Q98QJ8</accession>
<protein>
    <recommendedName>
        <fullName evidence="1">Putative N-acetylmannosamine-6-phosphate 2-epimerase</fullName>
        <ecNumber evidence="1">5.1.3.9</ecNumber>
    </recommendedName>
    <alternativeName>
        <fullName evidence="1">ManNAc-6-P epimerase</fullName>
    </alternativeName>
</protein>
<feature type="chain" id="PRO_0000179786" description="Putative N-acetylmannosamine-6-phosphate 2-epimerase">
    <location>
        <begin position="1"/>
        <end position="228"/>
    </location>
</feature>
<comment type="function">
    <text evidence="1">Converts N-acetylmannosamine-6-phosphate (ManNAc-6-P) to N-acetylglucosamine-6-phosphate (GlcNAc-6-P).</text>
</comment>
<comment type="catalytic activity">
    <reaction evidence="1">
        <text>an N-acyl-D-glucosamine 6-phosphate = an N-acyl-D-mannosamine 6-phosphate</text>
        <dbReference type="Rhea" id="RHEA:23932"/>
        <dbReference type="ChEBI" id="CHEBI:57599"/>
        <dbReference type="ChEBI" id="CHEBI:57666"/>
        <dbReference type="EC" id="5.1.3.9"/>
    </reaction>
</comment>
<comment type="pathway">
    <text evidence="1">Amino-sugar metabolism; N-acetylneuraminate degradation; D-fructose 6-phosphate from N-acetylneuraminate: step 3/5.</text>
</comment>
<comment type="similarity">
    <text evidence="1">Belongs to the NanE family.</text>
</comment>
<evidence type="ECO:0000255" key="1">
    <source>
        <dbReference type="HAMAP-Rule" id="MF_01235"/>
    </source>
</evidence>
<proteinExistence type="inferred from homology"/>
<keyword id="KW-0119">Carbohydrate metabolism</keyword>
<keyword id="KW-0413">Isomerase</keyword>
<keyword id="KW-1185">Reference proteome</keyword>
<dbReference type="EC" id="5.1.3.9" evidence="1"/>
<dbReference type="EMBL" id="AL445564">
    <property type="protein sequence ID" value="CAC13536.1"/>
    <property type="molecule type" value="Genomic_DNA"/>
</dbReference>
<dbReference type="PIR" id="C90557">
    <property type="entry name" value="C90557"/>
</dbReference>
<dbReference type="RefSeq" id="WP_010925167.1">
    <property type="nucleotide sequence ID" value="NC_002771.1"/>
</dbReference>
<dbReference type="SMR" id="Q98QJ8"/>
<dbReference type="STRING" id="272635.gene:17576963"/>
<dbReference type="KEGG" id="mpu:MYPU_3630"/>
<dbReference type="eggNOG" id="COG3010">
    <property type="taxonomic scope" value="Bacteria"/>
</dbReference>
<dbReference type="HOGENOM" id="CLU_086300_1_0_14"/>
<dbReference type="BioCyc" id="MPUL272635:G1GT6-371-MONOMER"/>
<dbReference type="UniPathway" id="UPA00629">
    <property type="reaction ID" value="UER00682"/>
</dbReference>
<dbReference type="Proteomes" id="UP000000528">
    <property type="component" value="Chromosome"/>
</dbReference>
<dbReference type="GO" id="GO:0005829">
    <property type="term" value="C:cytosol"/>
    <property type="evidence" value="ECO:0007669"/>
    <property type="project" value="TreeGrafter"/>
</dbReference>
<dbReference type="GO" id="GO:0047465">
    <property type="term" value="F:N-acylglucosamine-6-phosphate 2-epimerase activity"/>
    <property type="evidence" value="ECO:0007669"/>
    <property type="project" value="UniProtKB-EC"/>
</dbReference>
<dbReference type="GO" id="GO:0005975">
    <property type="term" value="P:carbohydrate metabolic process"/>
    <property type="evidence" value="ECO:0007669"/>
    <property type="project" value="UniProtKB-UniRule"/>
</dbReference>
<dbReference type="GO" id="GO:0006053">
    <property type="term" value="P:N-acetylmannosamine catabolic process"/>
    <property type="evidence" value="ECO:0007669"/>
    <property type="project" value="TreeGrafter"/>
</dbReference>
<dbReference type="GO" id="GO:0019262">
    <property type="term" value="P:N-acetylneuraminate catabolic process"/>
    <property type="evidence" value="ECO:0007669"/>
    <property type="project" value="UniProtKB-UniRule"/>
</dbReference>
<dbReference type="CDD" id="cd04729">
    <property type="entry name" value="NanE"/>
    <property type="match status" value="1"/>
</dbReference>
<dbReference type="Gene3D" id="3.20.20.70">
    <property type="entry name" value="Aldolase class I"/>
    <property type="match status" value="1"/>
</dbReference>
<dbReference type="HAMAP" id="MF_01235">
    <property type="entry name" value="ManNAc6P_epimer"/>
    <property type="match status" value="1"/>
</dbReference>
<dbReference type="InterPro" id="IPR013785">
    <property type="entry name" value="Aldolase_TIM"/>
</dbReference>
<dbReference type="InterPro" id="IPR007260">
    <property type="entry name" value="NanE"/>
</dbReference>
<dbReference type="InterPro" id="IPR011060">
    <property type="entry name" value="RibuloseP-bd_barrel"/>
</dbReference>
<dbReference type="NCBIfam" id="NF002231">
    <property type="entry name" value="PRK01130.1"/>
    <property type="match status" value="1"/>
</dbReference>
<dbReference type="PANTHER" id="PTHR36204">
    <property type="entry name" value="N-ACETYLMANNOSAMINE-6-PHOSPHATE 2-EPIMERASE-RELATED"/>
    <property type="match status" value="1"/>
</dbReference>
<dbReference type="PANTHER" id="PTHR36204:SF1">
    <property type="entry name" value="N-ACETYLMANNOSAMINE-6-PHOSPHATE 2-EPIMERASE-RELATED"/>
    <property type="match status" value="1"/>
</dbReference>
<dbReference type="Pfam" id="PF04131">
    <property type="entry name" value="NanE"/>
    <property type="match status" value="1"/>
</dbReference>
<dbReference type="SUPFAM" id="SSF51366">
    <property type="entry name" value="Ribulose-phoshate binding barrel"/>
    <property type="match status" value="1"/>
</dbReference>
<sequence>MFEKKLFFVSCQALKGEALYGKDIVVKLAKAAIQGGAQGLRTSQIKNIKALIRANFNVPIIGIIKQNYPNSDVYISPTLKEMKKLIKTGVQIIAIDATLRKRPKESLNQIVDYFFKHKKSHQLLMADCSSIEDVNNAIKLNFDIIGTTLRGYTEDTKNFSNTDDNYLFLRQVLKICQQNKKYLIAEGGFNSPQNAKDALDIGANAVVVGSAITRPQFITKMFYEKINS</sequence>
<reference key="1">
    <citation type="journal article" date="2001" name="Nucleic Acids Res.">
        <title>The complete genome sequence of the murine respiratory pathogen Mycoplasma pulmonis.</title>
        <authorList>
            <person name="Chambaud I."/>
            <person name="Heilig R."/>
            <person name="Ferris S."/>
            <person name="Barbe V."/>
            <person name="Samson D."/>
            <person name="Galisson F."/>
            <person name="Moszer I."/>
            <person name="Dybvig K."/>
            <person name="Wroblewski H."/>
            <person name="Viari A."/>
            <person name="Rocha E.P.C."/>
            <person name="Blanchard A."/>
        </authorList>
    </citation>
    <scope>NUCLEOTIDE SEQUENCE [LARGE SCALE GENOMIC DNA]</scope>
    <source>
        <strain>UAB CTIP</strain>
    </source>
</reference>
<organism>
    <name type="scientific">Mycoplasmopsis pulmonis (strain UAB CTIP)</name>
    <name type="common">Mycoplasma pulmonis</name>
    <dbReference type="NCBI Taxonomy" id="272635"/>
    <lineage>
        <taxon>Bacteria</taxon>
        <taxon>Bacillati</taxon>
        <taxon>Mycoplasmatota</taxon>
        <taxon>Mycoplasmoidales</taxon>
        <taxon>Metamycoplasmataceae</taxon>
        <taxon>Mycoplasmopsis</taxon>
    </lineage>
</organism>
<name>NANE_MYCPU</name>